<accession>P0CAN9</accession>
<accession>C6Y4A1</accession>
<accession>Q9HDY6</accession>
<feature type="transit peptide" description="Mitochondrion" evidence="1">
    <location>
        <begin position="1"/>
        <end position="38"/>
    </location>
</feature>
<feature type="chain" id="PRO_0000373861" description="Uncharacterized protein PB1A10.16, mitochondrial">
    <location>
        <begin position="39"/>
        <end position="143"/>
    </location>
</feature>
<reference key="1">
    <citation type="journal article" date="2002" name="Nature">
        <title>The genome sequence of Schizosaccharomyces pombe.</title>
        <authorList>
            <person name="Wood V."/>
            <person name="Gwilliam R."/>
            <person name="Rajandream M.A."/>
            <person name="Lyne M.H."/>
            <person name="Lyne R."/>
            <person name="Stewart A."/>
            <person name="Sgouros J.G."/>
            <person name="Peat N."/>
            <person name="Hayles J."/>
            <person name="Baker S.G."/>
            <person name="Basham D."/>
            <person name="Bowman S."/>
            <person name="Brooks K."/>
            <person name="Brown D."/>
            <person name="Brown S."/>
            <person name="Chillingworth T."/>
            <person name="Churcher C.M."/>
            <person name="Collins M."/>
            <person name="Connor R."/>
            <person name="Cronin A."/>
            <person name="Davis P."/>
            <person name="Feltwell T."/>
            <person name="Fraser A."/>
            <person name="Gentles S."/>
            <person name="Goble A."/>
            <person name="Hamlin N."/>
            <person name="Harris D.E."/>
            <person name="Hidalgo J."/>
            <person name="Hodgson G."/>
            <person name="Holroyd S."/>
            <person name="Hornsby T."/>
            <person name="Howarth S."/>
            <person name="Huckle E.J."/>
            <person name="Hunt S."/>
            <person name="Jagels K."/>
            <person name="James K.D."/>
            <person name="Jones L."/>
            <person name="Jones M."/>
            <person name="Leather S."/>
            <person name="McDonald S."/>
            <person name="McLean J."/>
            <person name="Mooney P."/>
            <person name="Moule S."/>
            <person name="Mungall K.L."/>
            <person name="Murphy L.D."/>
            <person name="Niblett D."/>
            <person name="Odell C."/>
            <person name="Oliver K."/>
            <person name="O'Neil S."/>
            <person name="Pearson D."/>
            <person name="Quail M.A."/>
            <person name="Rabbinowitsch E."/>
            <person name="Rutherford K.M."/>
            <person name="Rutter S."/>
            <person name="Saunders D."/>
            <person name="Seeger K."/>
            <person name="Sharp S."/>
            <person name="Skelton J."/>
            <person name="Simmonds M.N."/>
            <person name="Squares R."/>
            <person name="Squares S."/>
            <person name="Stevens K."/>
            <person name="Taylor K."/>
            <person name="Taylor R.G."/>
            <person name="Tivey A."/>
            <person name="Walsh S.V."/>
            <person name="Warren T."/>
            <person name="Whitehead S."/>
            <person name="Woodward J.R."/>
            <person name="Volckaert G."/>
            <person name="Aert R."/>
            <person name="Robben J."/>
            <person name="Grymonprez B."/>
            <person name="Weltjens I."/>
            <person name="Vanstreels E."/>
            <person name="Rieger M."/>
            <person name="Schaefer M."/>
            <person name="Mueller-Auer S."/>
            <person name="Gabel C."/>
            <person name="Fuchs M."/>
            <person name="Duesterhoeft A."/>
            <person name="Fritzc C."/>
            <person name="Holzer E."/>
            <person name="Moestl D."/>
            <person name="Hilbert H."/>
            <person name="Borzym K."/>
            <person name="Langer I."/>
            <person name="Beck A."/>
            <person name="Lehrach H."/>
            <person name="Reinhardt R."/>
            <person name="Pohl T.M."/>
            <person name="Eger P."/>
            <person name="Zimmermann W."/>
            <person name="Wedler H."/>
            <person name="Wambutt R."/>
            <person name="Purnelle B."/>
            <person name="Goffeau A."/>
            <person name="Cadieu E."/>
            <person name="Dreano S."/>
            <person name="Gloux S."/>
            <person name="Lelaure V."/>
            <person name="Mottier S."/>
            <person name="Galibert F."/>
            <person name="Aves S.J."/>
            <person name="Xiang Z."/>
            <person name="Hunt C."/>
            <person name="Moore K."/>
            <person name="Hurst S.M."/>
            <person name="Lucas M."/>
            <person name="Rochet M."/>
            <person name="Gaillardin C."/>
            <person name="Tallada V.A."/>
            <person name="Garzon A."/>
            <person name="Thode G."/>
            <person name="Daga R.R."/>
            <person name="Cruzado L."/>
            <person name="Jimenez J."/>
            <person name="Sanchez M."/>
            <person name="del Rey F."/>
            <person name="Benito J."/>
            <person name="Dominguez A."/>
            <person name="Revuelta J.L."/>
            <person name="Moreno S."/>
            <person name="Armstrong J."/>
            <person name="Forsburg S.L."/>
            <person name="Cerutti L."/>
            <person name="Lowe T."/>
            <person name="McCombie W.R."/>
            <person name="Paulsen I."/>
            <person name="Potashkin J."/>
            <person name="Shpakovski G.V."/>
            <person name="Ussery D."/>
            <person name="Barrell B.G."/>
            <person name="Nurse P."/>
        </authorList>
    </citation>
    <scope>NUCLEOTIDE SEQUENCE [LARGE SCALE GENOMIC DNA]</scope>
    <source>
        <strain>972 / ATCC 24843</strain>
    </source>
</reference>
<reference key="2">
    <citation type="unpublished observations" date="2008-09">
        <authorList>
            <consortium name="Schizosaccharomyces pombe GeneDB"/>
        </authorList>
    </citation>
    <scope>REVISION OF GENE MODEL</scope>
</reference>
<name>YK1G_SCHPO</name>
<organism>
    <name type="scientific">Schizosaccharomyces pombe (strain 972 / ATCC 24843)</name>
    <name type="common">Fission yeast</name>
    <dbReference type="NCBI Taxonomy" id="284812"/>
    <lineage>
        <taxon>Eukaryota</taxon>
        <taxon>Fungi</taxon>
        <taxon>Dikarya</taxon>
        <taxon>Ascomycota</taxon>
        <taxon>Taphrinomycotina</taxon>
        <taxon>Schizosaccharomycetes</taxon>
        <taxon>Schizosaccharomycetales</taxon>
        <taxon>Schizosaccharomycetaceae</taxon>
        <taxon>Schizosaccharomyces</taxon>
    </lineage>
</organism>
<protein>
    <recommendedName>
        <fullName>Uncharacterized protein PB1A10.16, mitochondrial</fullName>
    </recommendedName>
</protein>
<comment type="subcellular location">
    <subcellularLocation>
        <location evidence="2">Mitochondrion</location>
    </subcellularLocation>
</comment>
<gene>
    <name type="ORF">SPAPB1A10.16</name>
</gene>
<keyword id="KW-0496">Mitochondrion</keyword>
<keyword id="KW-1185">Reference proteome</keyword>
<keyword id="KW-0809">Transit peptide</keyword>
<dbReference type="EMBL" id="CU329670">
    <property type="protein sequence ID" value="CBA11497.1"/>
    <property type="molecule type" value="Genomic_DNA"/>
</dbReference>
<dbReference type="RefSeq" id="XP_002742506.1">
    <property type="nucleotide sequence ID" value="XM_002742460.1"/>
</dbReference>
<dbReference type="SMR" id="P0CAN9"/>
<dbReference type="STRING" id="284812.P0CAN9"/>
<dbReference type="PaxDb" id="4896-SPAPB1A10.16.1"/>
<dbReference type="EnsemblFungi" id="SPAPB1A10.16.1">
    <property type="protein sequence ID" value="SPAPB1A10.16.1:pep"/>
    <property type="gene ID" value="SPAPB1A10.16"/>
</dbReference>
<dbReference type="PomBase" id="SPAPB1A10.16"/>
<dbReference type="VEuPathDB" id="FungiDB:SPAPB1A10.16"/>
<dbReference type="eggNOG" id="KOG4353">
    <property type="taxonomic scope" value="Eukaryota"/>
</dbReference>
<dbReference type="HOGENOM" id="CLU_1807329_0_0_1"/>
<dbReference type="InParanoid" id="P0CAN9"/>
<dbReference type="OMA" id="KSGIQND"/>
<dbReference type="PhylomeDB" id="P0CAN9"/>
<dbReference type="PRO" id="PR:P0CAN9"/>
<dbReference type="Proteomes" id="UP000002485">
    <property type="component" value="Chromosome I"/>
</dbReference>
<dbReference type="GO" id="GO:0005739">
    <property type="term" value="C:mitochondrion"/>
    <property type="evidence" value="ECO:0000303"/>
    <property type="project" value="PomBase"/>
</dbReference>
<sequence>MKYWKYLSQLTIRRPLTYNNALLYRNRFPSILTWKRSATTQPDDTIFKDPVMDEQVQKLEEKMSSLVVNDPELAQKVGRLRQFFEKYGLEAGSKPSPLTILKITRDPEFKQLAETITEIFKKSGIQNDPAFLELVRRNLKKEK</sequence>
<evidence type="ECO:0000255" key="1"/>
<evidence type="ECO:0000305" key="2"/>
<proteinExistence type="predicted"/>